<name>RL28C_MYCTU</name>
<sequence length="64" mass="6904">MAAVCDICGKGPGFGKSVSHSHRRTSRRWDPNIQTVHAVTRPGGNKKRLNVCTSCIKAGKITRG</sequence>
<accession>P0DV54</accession>
<proteinExistence type="evidence at protein level"/>
<keyword id="KW-0002">3D-structure</keyword>
<keyword id="KW-0903">Direct protein sequencing</keyword>
<keyword id="KW-1185">Reference proteome</keyword>
<keyword id="KW-0687">Ribonucleoprotein</keyword>
<keyword id="KW-0689">Ribosomal protein</keyword>
<dbReference type="EMBL" id="AL123456">
    <property type="status" value="NOT_ANNOTATED_CDS"/>
    <property type="molecule type" value="Genomic_DNA"/>
</dbReference>
<dbReference type="RefSeq" id="YP_009030042.1">
    <property type="nucleotide sequence ID" value="NC_000962.3"/>
</dbReference>
<dbReference type="PDB" id="5V7Q">
    <property type="method" value="EM"/>
    <property type="resolution" value="3.70 A"/>
    <property type="chains" value="X=1-64"/>
</dbReference>
<dbReference type="PDB" id="5V93">
    <property type="method" value="EM"/>
    <property type="resolution" value="4.00 A"/>
    <property type="chains" value="X=1-64"/>
</dbReference>
<dbReference type="PDB" id="7KGB">
    <property type="method" value="EM"/>
    <property type="resolution" value="2.70 A"/>
    <property type="chains" value="X=1-64"/>
</dbReference>
<dbReference type="PDB" id="7MSC">
    <property type="method" value="EM"/>
    <property type="resolution" value="2.97 A"/>
    <property type="chains" value="X=1-64"/>
</dbReference>
<dbReference type="PDB" id="7MSH">
    <property type="method" value="EM"/>
    <property type="resolution" value="3.23 A"/>
    <property type="chains" value="X=1-64"/>
</dbReference>
<dbReference type="PDB" id="7MSM">
    <property type="method" value="EM"/>
    <property type="resolution" value="2.79 A"/>
    <property type="chains" value="X=1-64"/>
</dbReference>
<dbReference type="PDB" id="7MSZ">
    <property type="method" value="EM"/>
    <property type="resolution" value="3.10 A"/>
    <property type="chains" value="X=1-64"/>
</dbReference>
<dbReference type="PDB" id="7MT2">
    <property type="method" value="EM"/>
    <property type="resolution" value="2.76 A"/>
    <property type="chains" value="X=1-64"/>
</dbReference>
<dbReference type="PDB" id="7MT3">
    <property type="method" value="EM"/>
    <property type="resolution" value="2.80 A"/>
    <property type="chains" value="X=1-64"/>
</dbReference>
<dbReference type="PDB" id="7MT7">
    <property type="method" value="EM"/>
    <property type="resolution" value="2.71 A"/>
    <property type="chains" value="X=1-64"/>
</dbReference>
<dbReference type="PDB" id="7SFR">
    <property type="method" value="EM"/>
    <property type="resolution" value="2.60 A"/>
    <property type="chains" value="X=1-64"/>
</dbReference>
<dbReference type="PDBsum" id="5V7Q"/>
<dbReference type="PDBsum" id="5V93"/>
<dbReference type="PDBsum" id="7KGB"/>
<dbReference type="PDBsum" id="7MSC"/>
<dbReference type="PDBsum" id="7MSH"/>
<dbReference type="PDBsum" id="7MSM"/>
<dbReference type="PDBsum" id="7MSZ"/>
<dbReference type="PDBsum" id="7MT2"/>
<dbReference type="PDBsum" id="7MT3"/>
<dbReference type="PDBsum" id="7MT7"/>
<dbReference type="PDBsum" id="7SFR"/>
<dbReference type="EMDB" id="EMD-8645"/>
<dbReference type="SMR" id="P0DV54"/>
<dbReference type="FunCoup" id="P0DV54">
    <property type="interactions" value="57"/>
</dbReference>
<dbReference type="GeneID" id="19394683"/>
<dbReference type="KEGG" id="mtu:Rv2975a"/>
<dbReference type="KEGG" id="mtv:RVBD_2975A"/>
<dbReference type="TubercuList" id="Rv2975A"/>
<dbReference type="OrthoDB" id="9805609at2"/>
<dbReference type="Proteomes" id="UP000001584">
    <property type="component" value="Chromosome"/>
</dbReference>
<dbReference type="GO" id="GO:1990904">
    <property type="term" value="C:ribonucleoprotein complex"/>
    <property type="evidence" value="ECO:0007669"/>
    <property type="project" value="UniProtKB-KW"/>
</dbReference>
<dbReference type="GO" id="GO:0005840">
    <property type="term" value="C:ribosome"/>
    <property type="evidence" value="ECO:0007669"/>
    <property type="project" value="UniProtKB-KW"/>
</dbReference>
<dbReference type="GO" id="GO:0003735">
    <property type="term" value="F:structural constituent of ribosome"/>
    <property type="evidence" value="ECO:0007669"/>
    <property type="project" value="InterPro"/>
</dbReference>
<dbReference type="GO" id="GO:0006412">
    <property type="term" value="P:translation"/>
    <property type="evidence" value="ECO:0007669"/>
    <property type="project" value="UniProtKB-UniRule"/>
</dbReference>
<dbReference type="Gene3D" id="2.30.170.40">
    <property type="entry name" value="Ribosomal protein L28/L24"/>
    <property type="match status" value="1"/>
</dbReference>
<dbReference type="HAMAP" id="MF_00373">
    <property type="entry name" value="Ribosomal_bL28"/>
    <property type="match status" value="1"/>
</dbReference>
<dbReference type="InterPro" id="IPR050096">
    <property type="entry name" value="Bacterial_rp_bL28"/>
</dbReference>
<dbReference type="InterPro" id="IPR026569">
    <property type="entry name" value="Ribosomal_bL28"/>
</dbReference>
<dbReference type="InterPro" id="IPR034704">
    <property type="entry name" value="Ribosomal_bL28/bL31-like_sf"/>
</dbReference>
<dbReference type="InterPro" id="IPR001383">
    <property type="entry name" value="Ribosomal_bL28_bact-type"/>
</dbReference>
<dbReference type="InterPro" id="IPR037147">
    <property type="entry name" value="Ribosomal_bL28_sf"/>
</dbReference>
<dbReference type="NCBIfam" id="TIGR00009">
    <property type="entry name" value="L28"/>
    <property type="match status" value="1"/>
</dbReference>
<dbReference type="PANTHER" id="PTHR39080">
    <property type="entry name" value="50S RIBOSOMAL PROTEIN L28"/>
    <property type="match status" value="1"/>
</dbReference>
<dbReference type="PANTHER" id="PTHR39080:SF1">
    <property type="entry name" value="LARGE RIBOSOMAL SUBUNIT PROTEIN BL28A"/>
    <property type="match status" value="1"/>
</dbReference>
<dbReference type="Pfam" id="PF00830">
    <property type="entry name" value="Ribosomal_L28"/>
    <property type="match status" value="1"/>
</dbReference>
<dbReference type="SUPFAM" id="SSF143800">
    <property type="entry name" value="L28p-like"/>
    <property type="match status" value="1"/>
</dbReference>
<comment type="similarity">
    <text evidence="1">Belongs to the bacterial ribosomal protein bL28 family.</text>
</comment>
<evidence type="ECO:0000255" key="1">
    <source>
        <dbReference type="HAMAP-Rule" id="MF_00373"/>
    </source>
</evidence>
<evidence type="ECO:0000269" key="2">
    <source>
    </source>
</evidence>
<evidence type="ECO:0000305" key="3"/>
<protein>
    <recommendedName>
        <fullName evidence="1">Large ribosomal subunit protein bL28C</fullName>
    </recommendedName>
    <alternativeName>
        <fullName evidence="3">50S ribosomal protein L28 3</fullName>
    </alternativeName>
</protein>
<gene>
    <name evidence="1" type="primary">rpmB3</name>
    <name evidence="3" type="ordered locus">Rv2975A</name>
</gene>
<feature type="initiator methionine" description="Removed" evidence="2">
    <location>
        <position position="1"/>
    </location>
</feature>
<feature type="chain" id="PRO_0000455667" description="Large ribosomal subunit protein bL28C">
    <location>
        <begin position="2"/>
        <end position="64"/>
    </location>
</feature>
<reference key="1">
    <citation type="journal article" date="1998" name="Nature">
        <title>Deciphering the biology of Mycobacterium tuberculosis from the complete genome sequence.</title>
        <authorList>
            <person name="Cole S.T."/>
            <person name="Brosch R."/>
            <person name="Parkhill J."/>
            <person name="Garnier T."/>
            <person name="Churcher C.M."/>
            <person name="Harris D.E."/>
            <person name="Gordon S.V."/>
            <person name="Eiglmeier K."/>
            <person name="Gas S."/>
            <person name="Barry C.E. III"/>
            <person name="Tekaia F."/>
            <person name="Badcock K."/>
            <person name="Basham D."/>
            <person name="Brown D."/>
            <person name="Chillingworth T."/>
            <person name="Connor R."/>
            <person name="Davies R.M."/>
            <person name="Devlin K."/>
            <person name="Feltwell T."/>
            <person name="Gentles S."/>
            <person name="Hamlin N."/>
            <person name="Holroyd S."/>
            <person name="Hornsby T."/>
            <person name="Jagels K."/>
            <person name="Krogh A."/>
            <person name="McLean J."/>
            <person name="Moule S."/>
            <person name="Murphy L.D."/>
            <person name="Oliver S."/>
            <person name="Osborne J."/>
            <person name="Quail M.A."/>
            <person name="Rajandream M.A."/>
            <person name="Rogers J."/>
            <person name="Rutter S."/>
            <person name="Seeger K."/>
            <person name="Skelton S."/>
            <person name="Squares S."/>
            <person name="Squares R."/>
            <person name="Sulston J.E."/>
            <person name="Taylor K."/>
            <person name="Whitehead S."/>
            <person name="Barrell B.G."/>
        </authorList>
    </citation>
    <scope>NUCLEOTIDE SEQUENCE [LARGE SCALE GENOMIC DNA]</scope>
    <source>
        <strain>ATCC 25618 / H37Rv</strain>
    </source>
</reference>
<reference key="2">
    <citation type="journal article" date="2022" name="Genomics">
        <title>Deep N-terminomics of Mycobacterium tuberculosis H37Rv extensively correct annotated encoding genes.</title>
        <authorList>
            <person name="Shi J."/>
            <person name="Meng S."/>
            <person name="Wan L."/>
            <person name="Zhang Z."/>
            <person name="Jiang S."/>
            <person name="Zhu H."/>
            <person name="Dai E."/>
            <person name="Chang L."/>
            <person name="Gao H."/>
            <person name="Wan K."/>
            <person name="Zhang L."/>
            <person name="Zhao X."/>
            <person name="Liu H."/>
            <person name="Lyu Z."/>
            <person name="Zhang Y."/>
            <person name="Xu P."/>
        </authorList>
    </citation>
    <scope>IDENTIFICATION</scope>
    <scope>PROTEIN SEQUENCE OF 2-16 AND 49-57</scope>
    <source>
        <strain>H37Rv</strain>
    </source>
</reference>
<organism>
    <name type="scientific">Mycobacterium tuberculosis (strain ATCC 25618 / H37Rv)</name>
    <dbReference type="NCBI Taxonomy" id="83332"/>
    <lineage>
        <taxon>Bacteria</taxon>
        <taxon>Bacillati</taxon>
        <taxon>Actinomycetota</taxon>
        <taxon>Actinomycetes</taxon>
        <taxon>Mycobacteriales</taxon>
        <taxon>Mycobacteriaceae</taxon>
        <taxon>Mycobacterium</taxon>
        <taxon>Mycobacterium tuberculosis complex</taxon>
    </lineage>
</organism>